<comment type="function">
    <text evidence="5">Inhibits voltage-gated sodium channels (Nav).</text>
</comment>
<comment type="subcellular location">
    <subcellularLocation>
        <location evidence="3">Secreted</location>
    </subcellularLocation>
</comment>
<comment type="tissue specificity">
    <text evidence="6">Expressed by the venom gland.</text>
</comment>
<comment type="domain">
    <text evidence="5">Has the structural arrangement of an alpha-helix connected to antiparallel beta-sheets by disulfide bonds (CS-alpha/beta).</text>
</comment>
<comment type="similarity">
    <text evidence="5">Belongs to the long (4 C-C) scorpion toxin superfamily. Sodium channel inhibitor family.</text>
</comment>
<comment type="caution">
    <text evidence="5">The fragment sequence AC P84683 is identical to the sequence presented in this entry, but both peptides are probably different peptides, since the experimental molecular mass of AC P84683 does not correspond to theoretical mass of the peptide presented here.</text>
</comment>
<name>SCX13_TITOB</name>
<dbReference type="EMBL" id="HE585236">
    <property type="protein sequence ID" value="CCD31430.1"/>
    <property type="molecule type" value="mRNA"/>
</dbReference>
<dbReference type="EMBL" id="GEMQ01000083">
    <property type="protein sequence ID" value="JAT91106.1"/>
    <property type="molecule type" value="mRNA"/>
</dbReference>
<dbReference type="SMR" id="H1ZZI2"/>
<dbReference type="GO" id="GO:0005576">
    <property type="term" value="C:extracellular region"/>
    <property type="evidence" value="ECO:0007669"/>
    <property type="project" value="UniProtKB-SubCell"/>
</dbReference>
<dbReference type="GO" id="GO:0019871">
    <property type="term" value="F:sodium channel inhibitor activity"/>
    <property type="evidence" value="ECO:0007669"/>
    <property type="project" value="InterPro"/>
</dbReference>
<dbReference type="GO" id="GO:0090729">
    <property type="term" value="F:toxin activity"/>
    <property type="evidence" value="ECO:0007669"/>
    <property type="project" value="UniProtKB-KW"/>
</dbReference>
<dbReference type="CDD" id="cd23106">
    <property type="entry name" value="neurotoxins_LC_scorpion"/>
    <property type="match status" value="1"/>
</dbReference>
<dbReference type="Gene3D" id="3.30.30.10">
    <property type="entry name" value="Knottin, scorpion toxin-like"/>
    <property type="match status" value="1"/>
</dbReference>
<dbReference type="InterPro" id="IPR044062">
    <property type="entry name" value="LCN-type_CS_alpha_beta_dom"/>
</dbReference>
<dbReference type="InterPro" id="IPR036574">
    <property type="entry name" value="Scorpion_toxin-like_sf"/>
</dbReference>
<dbReference type="InterPro" id="IPR002061">
    <property type="entry name" value="Scorpion_toxinL/defensin"/>
</dbReference>
<dbReference type="Pfam" id="PF00537">
    <property type="entry name" value="Toxin_3"/>
    <property type="match status" value="1"/>
</dbReference>
<dbReference type="SUPFAM" id="SSF57095">
    <property type="entry name" value="Scorpion toxin-like"/>
    <property type="match status" value="1"/>
</dbReference>
<dbReference type="PROSITE" id="PS51863">
    <property type="entry name" value="LCN_CSAB"/>
    <property type="match status" value="1"/>
</dbReference>
<protein>
    <recommendedName>
        <fullName evidence="4">Sodium channel toxin To13</fullName>
    </recommendedName>
    <alternativeName>
        <fullName>T NaTx8.1</fullName>
    </alternativeName>
</protein>
<accession>H1ZZI2</accession>
<accession>A0A1E1WWD6</accession>
<feature type="signal peptide" evidence="1">
    <location>
        <begin position="1"/>
        <end position="18"/>
    </location>
</feature>
<feature type="chain" id="PRO_5000851438" description="Sodium channel toxin To13">
    <location>
        <begin position="19"/>
        <end position="89"/>
    </location>
</feature>
<feature type="domain" description="LCN-type CS-alpha/beta" evidence="2">
    <location>
        <begin position="20"/>
        <end position="87"/>
    </location>
</feature>
<feature type="disulfide bond" evidence="2">
    <location>
        <begin position="30"/>
        <end position="86"/>
    </location>
</feature>
<feature type="disulfide bond" evidence="2">
    <location>
        <begin position="34"/>
        <end position="60"/>
    </location>
</feature>
<feature type="disulfide bond" evidence="2">
    <location>
        <begin position="45"/>
        <end position="67"/>
    </location>
</feature>
<feature type="disulfide bond" evidence="2">
    <location>
        <begin position="49"/>
        <end position="69"/>
    </location>
</feature>
<feature type="sequence conflict" description="In Ref. 2; JAT91106." evidence="5" ref="2">
    <original>E</original>
    <variation>K</variation>
    <location>
        <position position="33"/>
    </location>
</feature>
<evidence type="ECO:0000255" key="1"/>
<evidence type="ECO:0000255" key="2">
    <source>
        <dbReference type="PROSITE-ProRule" id="PRU01210"/>
    </source>
</evidence>
<evidence type="ECO:0000269" key="3">
    <source>
    </source>
</evidence>
<evidence type="ECO:0000303" key="4">
    <source>
    </source>
</evidence>
<evidence type="ECO:0000305" key="5"/>
<evidence type="ECO:0000305" key="6">
    <source>
    </source>
</evidence>
<evidence type="ECO:0000312" key="7">
    <source>
        <dbReference type="EMBL" id="JAT91106.1"/>
    </source>
</evidence>
<reference key="1">
    <citation type="journal article" date="2012" name="PLoS ONE">
        <title>Identification and phylogenetic analysis of Tityus pachyurus and Tityus obscurus novel putative Na+-channel scorpion toxins.</title>
        <authorList>
            <person name="Guerrero-Vargas J.A."/>
            <person name="Mourao C.B."/>
            <person name="Quintero-Hernandez V."/>
            <person name="Possani L.D."/>
            <person name="Schwartz E.F."/>
        </authorList>
    </citation>
    <scope>NUCLEOTIDE SEQUENCE [MRNA]</scope>
    <scope>NOMENCLATURE</scope>
    <scope>SUBCELLULAR LOCATION</scope>
    <source>
        <tissue>Venom</tissue>
        <tissue>Venom gland</tissue>
    </source>
</reference>
<reference evidence="7" key="2">
    <citation type="journal article" date="2018" name="PLoS ONE">
        <title>Proteomic endorsed transcriptomic profiles of venom glands from Tityus obscurus and T. serrulatus scorpions.</title>
        <authorList>
            <person name="de Oliveira U.C."/>
            <person name="Nishiyama M.Y. Jr."/>
            <person name="Dos Santos M.B.V."/>
            <person name="Santos-da-Silva A.P."/>
            <person name="Chalkidis H.M."/>
            <person name="Souza-Imberg A."/>
            <person name="Candido D.M."/>
            <person name="Yamanouye N."/>
            <person name="Dorce V.A.C."/>
            <person name="Junqueira-de-Azevedo I.L.M."/>
        </authorList>
    </citation>
    <scope>NUCLEOTIDE SEQUENCE [MRNA]</scope>
    <source>
        <tissue>Telson</tissue>
    </source>
</reference>
<keyword id="KW-1015">Disulfide bond</keyword>
<keyword id="KW-0872">Ion channel impairing toxin</keyword>
<keyword id="KW-0528">Neurotoxin</keyword>
<keyword id="KW-0964">Secreted</keyword>
<keyword id="KW-0732">Signal</keyword>
<keyword id="KW-0800">Toxin</keyword>
<keyword id="KW-0738">Voltage-gated sodium channel impairing toxin</keyword>
<organism>
    <name type="scientific">Tityus obscurus</name>
    <name type="common">Amazonian scorpion</name>
    <name type="synonym">Tityus cambridgei</name>
    <dbReference type="NCBI Taxonomy" id="1221240"/>
    <lineage>
        <taxon>Eukaryota</taxon>
        <taxon>Metazoa</taxon>
        <taxon>Ecdysozoa</taxon>
        <taxon>Arthropoda</taxon>
        <taxon>Chelicerata</taxon>
        <taxon>Arachnida</taxon>
        <taxon>Scorpiones</taxon>
        <taxon>Buthida</taxon>
        <taxon>Buthoidea</taxon>
        <taxon>Buthidae</taxon>
        <taxon>Tityus</taxon>
    </lineage>
</organism>
<proteinExistence type="inferred from homology"/>
<sequence>MKTLFLIITSFILLEVEGIKNGYPRDSKGCTFECGQDAKHGDDYCDKMCKTTLKGEGGDCDFEYAECWCDNIPDTVVTWKNKEPKCKQI</sequence>